<protein>
    <recommendedName>
        <fullName evidence="1">Uridylate kinase</fullName>
        <shortName evidence="1">UK</shortName>
        <ecNumber evidence="1">2.7.4.22</ecNumber>
    </recommendedName>
    <alternativeName>
        <fullName evidence="1">Uridine monophosphate kinase</fullName>
        <shortName evidence="1">UMP kinase</shortName>
        <shortName evidence="1">UMPK</shortName>
    </alternativeName>
</protein>
<keyword id="KW-0067">ATP-binding</keyword>
<keyword id="KW-0963">Cytoplasm</keyword>
<keyword id="KW-0418">Kinase</keyword>
<keyword id="KW-0547">Nucleotide-binding</keyword>
<keyword id="KW-0665">Pyrimidine biosynthesis</keyword>
<keyword id="KW-1185">Reference proteome</keyword>
<keyword id="KW-0808">Transferase</keyword>
<dbReference type="EC" id="2.7.4.22" evidence="1"/>
<dbReference type="EMBL" id="CP000100">
    <property type="protein sequence ID" value="ABB56538.1"/>
    <property type="status" value="ALT_INIT"/>
    <property type="molecule type" value="Genomic_DNA"/>
</dbReference>
<dbReference type="RefSeq" id="WP_039755415.1">
    <property type="nucleotide sequence ID" value="NZ_JACJTX010000002.1"/>
</dbReference>
<dbReference type="SMR" id="Q31QY1"/>
<dbReference type="STRING" id="1140.Synpcc7942_0506"/>
<dbReference type="PaxDb" id="1140-Synpcc7942_0506"/>
<dbReference type="GeneID" id="72429329"/>
<dbReference type="KEGG" id="syf:Synpcc7942_0506"/>
<dbReference type="eggNOG" id="COG0528">
    <property type="taxonomic scope" value="Bacteria"/>
</dbReference>
<dbReference type="HOGENOM" id="CLU_033861_0_0_3"/>
<dbReference type="OrthoDB" id="9807458at2"/>
<dbReference type="BioCyc" id="SYNEL:SYNPCC7942_0506-MONOMER"/>
<dbReference type="UniPathway" id="UPA00159">
    <property type="reaction ID" value="UER00275"/>
</dbReference>
<dbReference type="Proteomes" id="UP000889800">
    <property type="component" value="Chromosome"/>
</dbReference>
<dbReference type="GO" id="GO:0005737">
    <property type="term" value="C:cytoplasm"/>
    <property type="evidence" value="ECO:0007669"/>
    <property type="project" value="UniProtKB-SubCell"/>
</dbReference>
<dbReference type="GO" id="GO:0005524">
    <property type="term" value="F:ATP binding"/>
    <property type="evidence" value="ECO:0007669"/>
    <property type="project" value="UniProtKB-KW"/>
</dbReference>
<dbReference type="GO" id="GO:0033862">
    <property type="term" value="F:UMP kinase activity"/>
    <property type="evidence" value="ECO:0007669"/>
    <property type="project" value="UniProtKB-EC"/>
</dbReference>
<dbReference type="GO" id="GO:0044210">
    <property type="term" value="P:'de novo' CTP biosynthetic process"/>
    <property type="evidence" value="ECO:0007669"/>
    <property type="project" value="UniProtKB-UniRule"/>
</dbReference>
<dbReference type="GO" id="GO:0006225">
    <property type="term" value="P:UDP biosynthetic process"/>
    <property type="evidence" value="ECO:0007669"/>
    <property type="project" value="TreeGrafter"/>
</dbReference>
<dbReference type="CDD" id="cd04254">
    <property type="entry name" value="AAK_UMPK-PyrH-Ec"/>
    <property type="match status" value="1"/>
</dbReference>
<dbReference type="FunFam" id="3.40.1160.10:FF:000001">
    <property type="entry name" value="Uridylate kinase"/>
    <property type="match status" value="1"/>
</dbReference>
<dbReference type="Gene3D" id="3.40.1160.10">
    <property type="entry name" value="Acetylglutamate kinase-like"/>
    <property type="match status" value="1"/>
</dbReference>
<dbReference type="HAMAP" id="MF_01220_B">
    <property type="entry name" value="PyrH_B"/>
    <property type="match status" value="1"/>
</dbReference>
<dbReference type="InterPro" id="IPR036393">
    <property type="entry name" value="AceGlu_kinase-like_sf"/>
</dbReference>
<dbReference type="InterPro" id="IPR001048">
    <property type="entry name" value="Asp/Glu/Uridylate_kinase"/>
</dbReference>
<dbReference type="InterPro" id="IPR011817">
    <property type="entry name" value="Uridylate_kinase"/>
</dbReference>
<dbReference type="InterPro" id="IPR015963">
    <property type="entry name" value="Uridylate_kinase_bac"/>
</dbReference>
<dbReference type="NCBIfam" id="TIGR02075">
    <property type="entry name" value="pyrH_bact"/>
    <property type="match status" value="1"/>
</dbReference>
<dbReference type="PANTHER" id="PTHR42833">
    <property type="entry name" value="URIDYLATE KINASE"/>
    <property type="match status" value="1"/>
</dbReference>
<dbReference type="PANTHER" id="PTHR42833:SF4">
    <property type="entry name" value="URIDYLATE KINASE PUMPKIN, CHLOROPLASTIC"/>
    <property type="match status" value="1"/>
</dbReference>
<dbReference type="Pfam" id="PF00696">
    <property type="entry name" value="AA_kinase"/>
    <property type="match status" value="1"/>
</dbReference>
<dbReference type="PIRSF" id="PIRSF005650">
    <property type="entry name" value="Uridylate_kin"/>
    <property type="match status" value="1"/>
</dbReference>
<dbReference type="SUPFAM" id="SSF53633">
    <property type="entry name" value="Carbamate kinase-like"/>
    <property type="match status" value="1"/>
</dbReference>
<gene>
    <name evidence="1" type="primary">pyrH</name>
    <name type="ordered locus">Synpcc7942_0506</name>
</gene>
<reference key="1">
    <citation type="submission" date="2005-08" db="EMBL/GenBank/DDBJ databases">
        <title>Complete sequence of chromosome 1 of Synechococcus elongatus PCC 7942.</title>
        <authorList>
            <consortium name="US DOE Joint Genome Institute"/>
            <person name="Copeland A."/>
            <person name="Lucas S."/>
            <person name="Lapidus A."/>
            <person name="Barry K."/>
            <person name="Detter J.C."/>
            <person name="Glavina T."/>
            <person name="Hammon N."/>
            <person name="Israni S."/>
            <person name="Pitluck S."/>
            <person name="Schmutz J."/>
            <person name="Larimer F."/>
            <person name="Land M."/>
            <person name="Kyrpides N."/>
            <person name="Lykidis A."/>
            <person name="Golden S."/>
            <person name="Richardson P."/>
        </authorList>
    </citation>
    <scope>NUCLEOTIDE SEQUENCE [LARGE SCALE GENOMIC DNA]</scope>
    <source>
        <strain>ATCC 33912 / PCC 7942 / FACHB-805</strain>
    </source>
</reference>
<sequence>MAYKRVLLKLSGEALMGDASYGIDPAVVQRIAQEIATVVQDGFQVAIVVGGGNIFRGIKGAAAGMERATADYVGMIATVMNAITLQDALEQLQVPTRVQTAIAMQEVAEPYIRRRAIRHLEKGRVVIFGSGTGNPFFTTDTTAALRAAEINADVVFKATKVDGVYDSDPKLNPQARRFTTLNYNYVLNHELGVMDSTAIALCKDNSIPIVVFDLFGEGNIRRAVQGEDIGTTVGGSCEVS</sequence>
<proteinExistence type="inferred from homology"/>
<feature type="chain" id="PRO_0000323968" description="Uridylate kinase">
    <location>
        <begin position="1"/>
        <end position="240"/>
    </location>
</feature>
<feature type="binding site" evidence="1">
    <location>
        <begin position="9"/>
        <end position="12"/>
    </location>
    <ligand>
        <name>ATP</name>
        <dbReference type="ChEBI" id="CHEBI:30616"/>
    </ligand>
</feature>
<feature type="binding site" evidence="1">
    <location>
        <position position="51"/>
    </location>
    <ligand>
        <name>UMP</name>
        <dbReference type="ChEBI" id="CHEBI:57865"/>
    </ligand>
</feature>
<feature type="binding site" evidence="1">
    <location>
        <position position="52"/>
    </location>
    <ligand>
        <name>ATP</name>
        <dbReference type="ChEBI" id="CHEBI:30616"/>
    </ligand>
</feature>
<feature type="binding site" evidence="1">
    <location>
        <position position="56"/>
    </location>
    <ligand>
        <name>ATP</name>
        <dbReference type="ChEBI" id="CHEBI:30616"/>
    </ligand>
</feature>
<feature type="binding site" evidence="1">
    <location>
        <position position="71"/>
    </location>
    <ligand>
        <name>UMP</name>
        <dbReference type="ChEBI" id="CHEBI:57865"/>
    </ligand>
</feature>
<feature type="binding site" evidence="1">
    <location>
        <begin position="132"/>
        <end position="139"/>
    </location>
    <ligand>
        <name>UMP</name>
        <dbReference type="ChEBI" id="CHEBI:57865"/>
    </ligand>
</feature>
<feature type="binding site" evidence="1">
    <location>
        <position position="159"/>
    </location>
    <ligand>
        <name>ATP</name>
        <dbReference type="ChEBI" id="CHEBI:30616"/>
    </ligand>
</feature>
<feature type="binding site" evidence="1">
    <location>
        <position position="165"/>
    </location>
    <ligand>
        <name>ATP</name>
        <dbReference type="ChEBI" id="CHEBI:30616"/>
    </ligand>
</feature>
<feature type="binding site" evidence="1">
    <location>
        <position position="168"/>
    </location>
    <ligand>
        <name>ATP</name>
        <dbReference type="ChEBI" id="CHEBI:30616"/>
    </ligand>
</feature>
<comment type="function">
    <text evidence="1">Catalyzes the reversible phosphorylation of UMP to UDP.</text>
</comment>
<comment type="catalytic activity">
    <reaction evidence="1">
        <text>UMP + ATP = UDP + ADP</text>
        <dbReference type="Rhea" id="RHEA:24400"/>
        <dbReference type="ChEBI" id="CHEBI:30616"/>
        <dbReference type="ChEBI" id="CHEBI:57865"/>
        <dbReference type="ChEBI" id="CHEBI:58223"/>
        <dbReference type="ChEBI" id="CHEBI:456216"/>
        <dbReference type="EC" id="2.7.4.22"/>
    </reaction>
</comment>
<comment type="activity regulation">
    <text evidence="1">Inhibited by UTP.</text>
</comment>
<comment type="pathway">
    <text evidence="1">Pyrimidine metabolism; CTP biosynthesis via de novo pathway; UDP from UMP (UMPK route): step 1/1.</text>
</comment>
<comment type="subunit">
    <text evidence="1">Homohexamer.</text>
</comment>
<comment type="subcellular location">
    <subcellularLocation>
        <location evidence="1">Cytoplasm</location>
    </subcellularLocation>
</comment>
<comment type="similarity">
    <text evidence="1">Belongs to the UMP kinase family.</text>
</comment>
<comment type="sequence caution" evidence="2">
    <conflict type="erroneous initiation">
        <sequence resource="EMBL-CDS" id="ABB56538"/>
    </conflict>
</comment>
<accession>Q31QY1</accession>
<organism>
    <name type="scientific">Synechococcus elongatus (strain ATCC 33912 / PCC 7942 / FACHB-805)</name>
    <name type="common">Anacystis nidulans R2</name>
    <dbReference type="NCBI Taxonomy" id="1140"/>
    <lineage>
        <taxon>Bacteria</taxon>
        <taxon>Bacillati</taxon>
        <taxon>Cyanobacteriota</taxon>
        <taxon>Cyanophyceae</taxon>
        <taxon>Synechococcales</taxon>
        <taxon>Synechococcaceae</taxon>
        <taxon>Synechococcus</taxon>
    </lineage>
</organism>
<name>PYRH_SYNE7</name>
<evidence type="ECO:0000255" key="1">
    <source>
        <dbReference type="HAMAP-Rule" id="MF_01220"/>
    </source>
</evidence>
<evidence type="ECO:0000305" key="2"/>